<accession>Q03395</accession>
<accession>B2R978</accession>
<reference key="1">
    <citation type="journal article" date="1992" name="Neuron">
        <title>Cloning of the cDNA for a novel photoreceptor membrane protein (rom-1) identifies a disk rim protein family implicated in human retinopathies.</title>
        <authorList>
            <person name="Bascom R.A."/>
            <person name="Manara S."/>
            <person name="Collins L."/>
            <person name="Molday R.S."/>
            <person name="Kalnins V.I."/>
            <person name="McInnes R.R."/>
        </authorList>
    </citation>
    <scope>NUCLEOTIDE SEQUENCE [MRNA]</scope>
    <scope>SUBUNIT</scope>
    <scope>SUBCELLULAR LOCATION</scope>
    <scope>TISSUE SPECIFICITY</scope>
    <scope>VARIANT ALA-118</scope>
    <source>
        <tissue>Retina</tissue>
    </source>
</reference>
<reference key="2">
    <citation type="journal article" date="1993" name="Hum. Mol. Genet.">
        <title>Cloning of the human and murine ROM1 genes: genomic organization and sequence conservation.</title>
        <authorList>
            <person name="Bascom R.A."/>
            <person name="Schappert K.T."/>
            <person name="McInnes R.R."/>
        </authorList>
    </citation>
    <scope>NUCLEOTIDE SEQUENCE [GENOMIC DNA]</scope>
    <scope>TISSUE SPECIFICITY</scope>
    <scope>VARIANT ALA-118</scope>
</reference>
<reference key="3">
    <citation type="journal article" date="2004" name="Nat. Genet.">
        <title>Complete sequencing and characterization of 21,243 full-length human cDNAs.</title>
        <authorList>
            <person name="Ota T."/>
            <person name="Suzuki Y."/>
            <person name="Nishikawa T."/>
            <person name="Otsuki T."/>
            <person name="Sugiyama T."/>
            <person name="Irie R."/>
            <person name="Wakamatsu A."/>
            <person name="Hayashi K."/>
            <person name="Sato H."/>
            <person name="Nagai K."/>
            <person name="Kimura K."/>
            <person name="Makita H."/>
            <person name="Sekine M."/>
            <person name="Obayashi M."/>
            <person name="Nishi T."/>
            <person name="Shibahara T."/>
            <person name="Tanaka T."/>
            <person name="Ishii S."/>
            <person name="Yamamoto J."/>
            <person name="Saito K."/>
            <person name="Kawai Y."/>
            <person name="Isono Y."/>
            <person name="Nakamura Y."/>
            <person name="Nagahari K."/>
            <person name="Murakami K."/>
            <person name="Yasuda T."/>
            <person name="Iwayanagi T."/>
            <person name="Wagatsuma M."/>
            <person name="Shiratori A."/>
            <person name="Sudo H."/>
            <person name="Hosoiri T."/>
            <person name="Kaku Y."/>
            <person name="Kodaira H."/>
            <person name="Kondo H."/>
            <person name="Sugawara M."/>
            <person name="Takahashi M."/>
            <person name="Kanda K."/>
            <person name="Yokoi T."/>
            <person name="Furuya T."/>
            <person name="Kikkawa E."/>
            <person name="Omura Y."/>
            <person name="Abe K."/>
            <person name="Kamihara K."/>
            <person name="Katsuta N."/>
            <person name="Sato K."/>
            <person name="Tanikawa M."/>
            <person name="Yamazaki M."/>
            <person name="Ninomiya K."/>
            <person name="Ishibashi T."/>
            <person name="Yamashita H."/>
            <person name="Murakawa K."/>
            <person name="Fujimori K."/>
            <person name="Tanai H."/>
            <person name="Kimata M."/>
            <person name="Watanabe M."/>
            <person name="Hiraoka S."/>
            <person name="Chiba Y."/>
            <person name="Ishida S."/>
            <person name="Ono Y."/>
            <person name="Takiguchi S."/>
            <person name="Watanabe S."/>
            <person name="Yosida M."/>
            <person name="Hotuta T."/>
            <person name="Kusano J."/>
            <person name="Kanehori K."/>
            <person name="Takahashi-Fujii A."/>
            <person name="Hara H."/>
            <person name="Tanase T.-O."/>
            <person name="Nomura Y."/>
            <person name="Togiya S."/>
            <person name="Komai F."/>
            <person name="Hara R."/>
            <person name="Takeuchi K."/>
            <person name="Arita M."/>
            <person name="Imose N."/>
            <person name="Musashino K."/>
            <person name="Yuuki H."/>
            <person name="Oshima A."/>
            <person name="Sasaki N."/>
            <person name="Aotsuka S."/>
            <person name="Yoshikawa Y."/>
            <person name="Matsunawa H."/>
            <person name="Ichihara T."/>
            <person name="Shiohata N."/>
            <person name="Sano S."/>
            <person name="Moriya S."/>
            <person name="Momiyama H."/>
            <person name="Satoh N."/>
            <person name="Takami S."/>
            <person name="Terashima Y."/>
            <person name="Suzuki O."/>
            <person name="Nakagawa S."/>
            <person name="Senoh A."/>
            <person name="Mizoguchi H."/>
            <person name="Goto Y."/>
            <person name="Shimizu F."/>
            <person name="Wakebe H."/>
            <person name="Hishigaki H."/>
            <person name="Watanabe T."/>
            <person name="Sugiyama A."/>
            <person name="Takemoto M."/>
            <person name="Kawakami B."/>
            <person name="Yamazaki M."/>
            <person name="Watanabe K."/>
            <person name="Kumagai A."/>
            <person name="Itakura S."/>
            <person name="Fukuzumi Y."/>
            <person name="Fujimori Y."/>
            <person name="Komiyama M."/>
            <person name="Tashiro H."/>
            <person name="Tanigami A."/>
            <person name="Fujiwara T."/>
            <person name="Ono T."/>
            <person name="Yamada K."/>
            <person name="Fujii Y."/>
            <person name="Ozaki K."/>
            <person name="Hirao M."/>
            <person name="Ohmori Y."/>
            <person name="Kawabata A."/>
            <person name="Hikiji T."/>
            <person name="Kobatake N."/>
            <person name="Inagaki H."/>
            <person name="Ikema Y."/>
            <person name="Okamoto S."/>
            <person name="Okitani R."/>
            <person name="Kawakami T."/>
            <person name="Noguchi S."/>
            <person name="Itoh T."/>
            <person name="Shigeta K."/>
            <person name="Senba T."/>
            <person name="Matsumura K."/>
            <person name="Nakajima Y."/>
            <person name="Mizuno T."/>
            <person name="Morinaga M."/>
            <person name="Sasaki M."/>
            <person name="Togashi T."/>
            <person name="Oyama M."/>
            <person name="Hata H."/>
            <person name="Watanabe M."/>
            <person name="Komatsu T."/>
            <person name="Mizushima-Sugano J."/>
            <person name="Satoh T."/>
            <person name="Shirai Y."/>
            <person name="Takahashi Y."/>
            <person name="Nakagawa K."/>
            <person name="Okumura K."/>
            <person name="Nagase T."/>
            <person name="Nomura N."/>
            <person name="Kikuchi H."/>
            <person name="Masuho Y."/>
            <person name="Yamashita R."/>
            <person name="Nakai K."/>
            <person name="Yada T."/>
            <person name="Nakamura Y."/>
            <person name="Ohara O."/>
            <person name="Isogai T."/>
            <person name="Sugano S."/>
        </authorList>
    </citation>
    <scope>NUCLEOTIDE SEQUENCE [LARGE SCALE MRNA]</scope>
    <scope>VARIANT ALA-118</scope>
    <source>
        <tissue>Substantia nigra</tissue>
    </source>
</reference>
<reference key="4">
    <citation type="journal article" date="2006" name="Nature">
        <title>Human chromosome 11 DNA sequence and analysis including novel gene identification.</title>
        <authorList>
            <person name="Taylor T.D."/>
            <person name="Noguchi H."/>
            <person name="Totoki Y."/>
            <person name="Toyoda A."/>
            <person name="Kuroki Y."/>
            <person name="Dewar K."/>
            <person name="Lloyd C."/>
            <person name="Itoh T."/>
            <person name="Takeda T."/>
            <person name="Kim D.-W."/>
            <person name="She X."/>
            <person name="Barlow K.F."/>
            <person name="Bloom T."/>
            <person name="Bruford E."/>
            <person name="Chang J.L."/>
            <person name="Cuomo C.A."/>
            <person name="Eichler E."/>
            <person name="FitzGerald M.G."/>
            <person name="Jaffe D.B."/>
            <person name="LaButti K."/>
            <person name="Nicol R."/>
            <person name="Park H.-S."/>
            <person name="Seaman C."/>
            <person name="Sougnez C."/>
            <person name="Yang X."/>
            <person name="Zimmer A.R."/>
            <person name="Zody M.C."/>
            <person name="Birren B.W."/>
            <person name="Nusbaum C."/>
            <person name="Fujiyama A."/>
            <person name="Hattori M."/>
            <person name="Rogers J."/>
            <person name="Lander E.S."/>
            <person name="Sakaki Y."/>
        </authorList>
    </citation>
    <scope>NUCLEOTIDE SEQUENCE [LARGE SCALE GENOMIC DNA]</scope>
</reference>
<reference key="5">
    <citation type="journal article" date="2004" name="Genome Res.">
        <title>The status, quality, and expansion of the NIH full-length cDNA project: the Mammalian Gene Collection (MGC).</title>
        <authorList>
            <consortium name="The MGC Project Team"/>
        </authorList>
    </citation>
    <scope>NUCLEOTIDE SEQUENCE [LARGE SCALE MRNA]</scope>
    <scope>VARIANT ALA-118</scope>
    <source>
        <tissue>Brain</tissue>
    </source>
</reference>
<reference key="6">
    <citation type="journal article" date="1994" name="Science">
        <title>Digenic retinitis pigmentosa due to mutations at the unlinked peripherin/RDS and ROM1 loci.</title>
        <authorList>
            <person name="Kajiwara K."/>
            <person name="Berson E.L."/>
            <person name="Dryja T.P."/>
        </authorList>
    </citation>
    <scope>INVOLVEMENT IN RP7</scope>
</reference>
<reference key="7">
    <citation type="journal article" date="1993" name="Hum. Mol. Genet.">
        <title>Polymorphisms and rare sequence variants at the ROM1 locus.</title>
        <authorList>
            <person name="Bascom R.A."/>
            <person name="Liu L."/>
            <person name="Humphries P."/>
            <person name="Fishman G.A."/>
            <person name="Murray J.C."/>
            <person name="McInnes R.R."/>
        </authorList>
    </citation>
    <scope>VARIANTS ALA-118; HIS-229; THR-265 AND THR-271</scope>
</reference>
<reference key="8">
    <citation type="journal article" date="1995" name="Hum. Mol. Genet.">
        <title>Mutation analysis of the ROM1 gene in retinitis pigmentosa.</title>
        <authorList>
            <person name="Bascom R.A."/>
            <person name="Liu L."/>
            <person name="Heckenlively J.R."/>
            <person name="Stone E.M."/>
            <person name="McInnes R.R."/>
        </authorList>
    </citation>
    <scope>VARIANTS THR-60; ASP-75; MET-108 AND GLN-242</scope>
</reference>
<reference key="9">
    <citation type="journal article" date="1997" name="Invest. Ophthalmol. Vis. Sci.">
        <title>Dominant and digenic mutations in the peripherin/RDS and ROM1 genes in retinitis pigmentosa.</title>
        <authorList>
            <person name="Dryja T.P."/>
            <person name="Hahn L.B."/>
            <person name="Kajiwara K."/>
            <person name="Berson E.L."/>
        </authorList>
    </citation>
    <scope>INVOLVEMENT IN RP7</scope>
    <scope>VARIANT HIS-16</scope>
</reference>
<reference key="10">
    <citation type="journal article" date="2010" name="Invest. Ophthalmol. Vis. Sci.">
        <title>ABCA4 and ROM1: implications for modification of the PRPH2-associated macular dystrophy phenotype.</title>
        <authorList>
            <person name="Poloschek C.M."/>
            <person name="Bach M."/>
            <person name="Lagreze W.A."/>
            <person name="Glaus E."/>
            <person name="Lemke J.R."/>
            <person name="Berger W."/>
            <person name="Neidhardt J."/>
        </authorList>
    </citation>
    <scope>VARIANT HIS-229</scope>
</reference>
<evidence type="ECO:0000250" key="1">
    <source>
        <dbReference type="UniProtKB" id="P32958"/>
    </source>
</evidence>
<evidence type="ECO:0000250" key="2">
    <source>
        <dbReference type="UniProtKB" id="P52205"/>
    </source>
</evidence>
<evidence type="ECO:0000255" key="3"/>
<evidence type="ECO:0000256" key="4">
    <source>
        <dbReference type="SAM" id="MobiDB-lite"/>
    </source>
</evidence>
<evidence type="ECO:0000269" key="5">
    <source>
    </source>
</evidence>
<evidence type="ECO:0000269" key="6">
    <source>
    </source>
</evidence>
<evidence type="ECO:0000269" key="7">
    <source>
    </source>
</evidence>
<evidence type="ECO:0000269" key="8">
    <source>
    </source>
</evidence>
<evidence type="ECO:0000269" key="9">
    <source>
    </source>
</evidence>
<evidence type="ECO:0000269" key="10">
    <source>
    </source>
</evidence>
<evidence type="ECO:0000269" key="11">
    <source>
    </source>
</evidence>
<evidence type="ECO:0000269" key="12">
    <source>
    </source>
</evidence>
<evidence type="ECO:0000269" key="13">
    <source>
    </source>
</evidence>
<evidence type="ECO:0000305" key="14"/>
<evidence type="ECO:0000305" key="15">
    <source>
    </source>
</evidence>
<proteinExistence type="evidence at protein level"/>
<feature type="chain" id="PRO_0000168111" description="Rod outer segment membrane protein 1">
    <location>
        <begin position="1"/>
        <end position="351"/>
    </location>
</feature>
<feature type="topological domain" description="Cytoplasmic" evidence="3">
    <location>
        <begin position="1"/>
        <end position="19"/>
    </location>
</feature>
<feature type="transmembrane region" description="Helical" evidence="3">
    <location>
        <begin position="20"/>
        <end position="44"/>
    </location>
</feature>
<feature type="topological domain" description="Lumenal" evidence="3">
    <location>
        <begin position="45"/>
        <end position="64"/>
    </location>
</feature>
<feature type="transmembrane region" description="Helical" evidence="3">
    <location>
        <begin position="65"/>
        <end position="84"/>
    </location>
</feature>
<feature type="topological domain" description="Cytoplasmic" evidence="3">
    <location>
        <begin position="85"/>
        <end position="102"/>
    </location>
</feature>
<feature type="transmembrane region" description="Helical" evidence="3">
    <location>
        <begin position="103"/>
        <end position="125"/>
    </location>
</feature>
<feature type="topological domain" description="Lumenal" evidence="3">
    <location>
        <begin position="126"/>
        <end position="263"/>
    </location>
</feature>
<feature type="transmembrane region" description="Helical" evidence="3">
    <location>
        <begin position="264"/>
        <end position="286"/>
    </location>
</feature>
<feature type="topological domain" description="Cytoplasmic" evidence="3">
    <location>
        <begin position="287"/>
        <end position="351"/>
    </location>
</feature>
<feature type="region of interest" description="Disordered" evidence="4">
    <location>
        <begin position="331"/>
        <end position="351"/>
    </location>
</feature>
<feature type="sequence variant" id="VAR_008269" description="In dbSNP:rs143166696." evidence="13">
    <original>R</original>
    <variation>H</variation>
    <location>
        <position position="16"/>
    </location>
</feature>
<feature type="sequence variant" id="VAR_006896" description="In dbSNP:rs199757012." evidence="12">
    <original>P</original>
    <variation>T</variation>
    <location>
        <position position="60"/>
    </location>
</feature>
<feature type="sequence variant" id="VAR_008270" description="In dbSNP:rs747140028." evidence="12">
    <original>G</original>
    <variation>D</variation>
    <location>
        <position position="75"/>
    </location>
</feature>
<feature type="sequence variant" id="VAR_006897" description="In dbSNP:rs146358003." evidence="12">
    <original>T</original>
    <variation>M</variation>
    <location>
        <position position="108"/>
    </location>
</feature>
<feature type="sequence variant" id="VAR_008271" description="In dbSNP:rs1799959." evidence="5 6 7 9 11">
    <original>G</original>
    <variation>A</variation>
    <location>
        <position position="118"/>
    </location>
</feature>
<feature type="sequence variant" id="VAR_006898" description="In patients with macular dysfunction; macular dysfunction severity is influenced by the presence of a W-172 mutation in PRPH2.; dbSNP:rs150168119." evidence="8 9">
    <original>R</original>
    <variation>H</variation>
    <location>
        <position position="229"/>
    </location>
</feature>
<feature type="sequence variant" id="VAR_008272" description="In dbSNP:rs767877192." evidence="12">
    <original>R</original>
    <variation>Q</variation>
    <location>
        <position position="242"/>
    </location>
</feature>
<feature type="sequence variant" id="VAR_006899" description="In dbSNP:rs200272942." evidence="9">
    <original>A</original>
    <variation>T</variation>
    <location>
        <position position="265"/>
    </location>
</feature>
<feature type="sequence variant" id="VAR_006900" description="In dbSNP:rs137950927." evidence="9">
    <original>M</original>
    <variation>T</variation>
    <location>
        <position position="271"/>
    </location>
</feature>
<comment type="function">
    <text evidence="1 2">Plays a role in rod outer segment (ROS) morphogenesis (By similarity). May play a role with PRPH2 in the maintenance of the structure of ROS curved disks (By similarity). Plays a role in the organization of the ROS and maintenance of ROS disk diameter (By similarity). Involved in the maintenance of the retina outer nuclear layer (By similarity).</text>
</comment>
<comment type="subunit">
    <text evidence="1 2 7">Homodimer; disulfide-linked (PubMed:1610568). Forms a homotetramer (By similarity). Forms a heterotetramer with PRPH2 (By similarity). Homotetramer and heterotetramer core complexes go on to form higher order complexes by formation of intermolecular disulfide bonds (By similarity). Interacts with STX3 (By similarity). Interacts with SNAP25 (By similarity).</text>
</comment>
<comment type="interaction">
    <interactant intactId="EBI-9395257">
        <id>Q03395</id>
    </interactant>
    <interactant intactId="EBI-1752413">
        <id>P78329</id>
        <label>CYP4F2</label>
    </interactant>
    <organismsDiffer>false</organismsDiffer>
    <experiments>3</experiments>
</comment>
<comment type="interaction">
    <interactant intactId="EBI-9395257">
        <id>Q03395</id>
    </interactant>
    <interactant intactId="EBI-709754">
        <id>Q9HB07</id>
        <label>MYG1</label>
    </interactant>
    <organismsDiffer>false</organismsDiffer>
    <experiments>3</experiments>
</comment>
<comment type="interaction">
    <interactant intactId="EBI-9395257">
        <id>Q03395</id>
    </interactant>
    <interactant intactId="EBI-721750">
        <id>Q8N138</id>
        <label>ORMDL3</label>
    </interactant>
    <organismsDiffer>false</organismsDiffer>
    <experiments>3</experiments>
</comment>
<comment type="subcellular location">
    <subcellularLocation>
        <location evidence="1 15">Photoreceptor inner segment membrane</location>
        <topology evidence="3">Multi-pass membrane protein</topology>
    </subcellularLocation>
    <subcellularLocation>
        <location evidence="7">Photoreceptor outer segment membrane</location>
        <topology evidence="3">Multi-pass membrane protein</topology>
    </subcellularLocation>
</comment>
<comment type="tissue specificity">
    <text evidence="7 11">Retina photoreceptors (at protein level) (PubMed:1610568, PubMed:8504299). In rim region of ROS disks (PubMed:1610568).</text>
</comment>
<comment type="disease" evidence="10 13">
    <disease id="DI-00975">
        <name>Retinitis pigmentosa 7</name>
        <acronym>RP7</acronym>
        <description>A retinal dystrophy belonging to the group of pigmentary retinopathies. Retinitis pigmentosa is characterized by retinal pigment deposits visible on fundus examination and primary loss of rod photoreceptor cells followed by secondary loss of cone photoreceptors. Patients typically have night vision blindness and loss of midperipheral visual field. As their condition progresses, they lose their far peripheral visual field and eventually central vision as well.</description>
        <dbReference type="MIM" id="608133"/>
    </disease>
    <text evidence="10">The disease may be caused by variants affecting distinct genetic loci, including the gene represented in this entry. A digenic form of retinitis pigmentosa 7 results from a mutation in the PRPH2 gene and a null mutation of the ROM1 gene has been reported (PubMed:8202715).</text>
</comment>
<comment type="similarity">
    <text evidence="14">Belongs to the PRPH2/ROM1 family.</text>
</comment>
<name>ROM1_HUMAN</name>
<organism>
    <name type="scientific">Homo sapiens</name>
    <name type="common">Human</name>
    <dbReference type="NCBI Taxonomy" id="9606"/>
    <lineage>
        <taxon>Eukaryota</taxon>
        <taxon>Metazoa</taxon>
        <taxon>Chordata</taxon>
        <taxon>Craniata</taxon>
        <taxon>Vertebrata</taxon>
        <taxon>Euteleostomi</taxon>
        <taxon>Mammalia</taxon>
        <taxon>Eutheria</taxon>
        <taxon>Euarchontoglires</taxon>
        <taxon>Primates</taxon>
        <taxon>Haplorrhini</taxon>
        <taxon>Catarrhini</taxon>
        <taxon>Hominidae</taxon>
        <taxon>Homo</taxon>
    </lineage>
</organism>
<keyword id="KW-0002">3D-structure</keyword>
<keyword id="KW-0130">Cell adhesion</keyword>
<keyword id="KW-0966">Cell projection</keyword>
<keyword id="KW-0225">Disease variant</keyword>
<keyword id="KW-1015">Disulfide bond</keyword>
<keyword id="KW-0472">Membrane</keyword>
<keyword id="KW-1267">Proteomics identification</keyword>
<keyword id="KW-1185">Reference proteome</keyword>
<keyword id="KW-0682">Retinitis pigmentosa</keyword>
<keyword id="KW-0716">Sensory transduction</keyword>
<keyword id="KW-0812">Transmembrane</keyword>
<keyword id="KW-1133">Transmembrane helix</keyword>
<keyword id="KW-0844">Vision</keyword>
<protein>
    <recommendedName>
        <fullName>Rod outer segment membrane protein 1</fullName>
        <shortName>ROSP1</shortName>
    </recommendedName>
    <alternativeName>
        <fullName>Tetraspanin-23</fullName>
        <shortName>Tspan-23</shortName>
    </alternativeName>
</protein>
<gene>
    <name type="primary">ROM1</name>
    <name type="synonym">TSPAN23</name>
</gene>
<dbReference type="EMBL" id="L07894">
    <property type="protein sequence ID" value="AAA60274.1"/>
    <property type="molecule type" value="mRNA"/>
</dbReference>
<dbReference type="EMBL" id="M96759">
    <property type="protein sequence ID" value="AAA60272.1"/>
    <property type="molecule type" value="Genomic_DNA"/>
</dbReference>
<dbReference type="EMBL" id="AK313674">
    <property type="protein sequence ID" value="BAG36425.1"/>
    <property type="molecule type" value="mRNA"/>
</dbReference>
<dbReference type="EMBL" id="AP001458">
    <property type="status" value="NOT_ANNOTATED_CDS"/>
    <property type="molecule type" value="Genomic_DNA"/>
</dbReference>
<dbReference type="EMBL" id="BC008100">
    <property type="protein sequence ID" value="AAH08100.1"/>
    <property type="molecule type" value="mRNA"/>
</dbReference>
<dbReference type="CCDS" id="CCDS8024.1"/>
<dbReference type="PIR" id="I54347">
    <property type="entry name" value="I54347"/>
</dbReference>
<dbReference type="RefSeq" id="NP_000318.2">
    <property type="nucleotide sequence ID" value="NM_000327.4"/>
</dbReference>
<dbReference type="PDB" id="7ZW1">
    <property type="method" value="EM"/>
    <property type="resolution" value="3.70 A"/>
    <property type="chains" value="B=2-351"/>
</dbReference>
<dbReference type="PDBsum" id="7ZW1"/>
<dbReference type="EMDB" id="EMD-14991"/>
<dbReference type="SMR" id="Q03395"/>
<dbReference type="BioGRID" id="112021">
    <property type="interactions" value="4"/>
</dbReference>
<dbReference type="FunCoup" id="Q03395">
    <property type="interactions" value="342"/>
</dbReference>
<dbReference type="IntAct" id="Q03395">
    <property type="interactions" value="5"/>
</dbReference>
<dbReference type="STRING" id="9606.ENSP00000278833"/>
<dbReference type="GlyGen" id="Q03395">
    <property type="glycosylation" value="3 sites, 1 O-linked glycan (3 sites)"/>
</dbReference>
<dbReference type="iPTMnet" id="Q03395"/>
<dbReference type="PhosphoSitePlus" id="Q03395"/>
<dbReference type="BioMuta" id="ROM1"/>
<dbReference type="DMDM" id="143745282"/>
<dbReference type="MassIVE" id="Q03395"/>
<dbReference type="PaxDb" id="9606-ENSP00000278833"/>
<dbReference type="PeptideAtlas" id="Q03395"/>
<dbReference type="ProteomicsDB" id="58206"/>
<dbReference type="Antibodypedia" id="28554">
    <property type="antibodies" value="85 antibodies from 22 providers"/>
</dbReference>
<dbReference type="DNASU" id="6094"/>
<dbReference type="Ensembl" id="ENST00000278833.4">
    <property type="protein sequence ID" value="ENSP00000278833.3"/>
    <property type="gene ID" value="ENSG00000149489.9"/>
</dbReference>
<dbReference type="GeneID" id="6094"/>
<dbReference type="KEGG" id="hsa:6094"/>
<dbReference type="MANE-Select" id="ENST00000278833.4">
    <property type="protein sequence ID" value="ENSP00000278833.3"/>
    <property type="RefSeq nucleotide sequence ID" value="NM_000327.4"/>
    <property type="RefSeq protein sequence ID" value="NP_000318.2"/>
</dbReference>
<dbReference type="UCSC" id="uc001ntv.5">
    <property type="organism name" value="human"/>
</dbReference>
<dbReference type="AGR" id="HGNC:10254"/>
<dbReference type="CTD" id="6094"/>
<dbReference type="DisGeNET" id="6094"/>
<dbReference type="GeneCards" id="ROM1"/>
<dbReference type="GeneReviews" id="ROM1"/>
<dbReference type="HGNC" id="HGNC:10254">
    <property type="gene designation" value="ROM1"/>
</dbReference>
<dbReference type="HPA" id="ENSG00000149489">
    <property type="expression patterns" value="Tissue enriched (retina)"/>
</dbReference>
<dbReference type="MalaCards" id="ROM1"/>
<dbReference type="MIM" id="180721">
    <property type="type" value="gene"/>
</dbReference>
<dbReference type="MIM" id="608133">
    <property type="type" value="phenotype"/>
</dbReference>
<dbReference type="neXtProt" id="NX_Q03395"/>
<dbReference type="OpenTargets" id="ENSG00000149489"/>
<dbReference type="Orphanet" id="791">
    <property type="disease" value="Retinitis pigmentosa"/>
</dbReference>
<dbReference type="PharmGKB" id="PA34626"/>
<dbReference type="VEuPathDB" id="HostDB:ENSG00000149489"/>
<dbReference type="eggNOG" id="KOG3882">
    <property type="taxonomic scope" value="Eukaryota"/>
</dbReference>
<dbReference type="GeneTree" id="ENSGT00940000159921"/>
<dbReference type="HOGENOM" id="CLU_068903_0_0_1"/>
<dbReference type="InParanoid" id="Q03395"/>
<dbReference type="OMA" id="AARYPPW"/>
<dbReference type="OrthoDB" id="9836210at2759"/>
<dbReference type="PAN-GO" id="Q03395">
    <property type="GO annotations" value="1 GO annotation based on evolutionary models"/>
</dbReference>
<dbReference type="PhylomeDB" id="Q03395"/>
<dbReference type="TreeFam" id="TF331684"/>
<dbReference type="PathwayCommons" id="Q03395"/>
<dbReference type="SignaLink" id="Q03395"/>
<dbReference type="BioGRID-ORCS" id="6094">
    <property type="hits" value="31 hits in 1155 CRISPR screens"/>
</dbReference>
<dbReference type="GeneWiki" id="ROM1"/>
<dbReference type="GenomeRNAi" id="6094"/>
<dbReference type="Pharos" id="Q03395">
    <property type="development level" value="Tbio"/>
</dbReference>
<dbReference type="PRO" id="PR:Q03395"/>
<dbReference type="Proteomes" id="UP000005640">
    <property type="component" value="Chromosome 11"/>
</dbReference>
<dbReference type="RNAct" id="Q03395">
    <property type="molecule type" value="protein"/>
</dbReference>
<dbReference type="Bgee" id="ENSG00000149489">
    <property type="expression patterns" value="Expressed in primordial germ cell in gonad and 129 other cell types or tissues"/>
</dbReference>
<dbReference type="ExpressionAtlas" id="Q03395">
    <property type="expression patterns" value="baseline and differential"/>
</dbReference>
<dbReference type="GO" id="GO:0042622">
    <property type="term" value="C:photoreceptor outer segment membrane"/>
    <property type="evidence" value="ECO:0007669"/>
    <property type="project" value="Ensembl"/>
</dbReference>
<dbReference type="GO" id="GO:0005886">
    <property type="term" value="C:plasma membrane"/>
    <property type="evidence" value="ECO:0000318"/>
    <property type="project" value="GO_Central"/>
</dbReference>
<dbReference type="GO" id="GO:0042803">
    <property type="term" value="F:protein homodimerization activity"/>
    <property type="evidence" value="ECO:0007669"/>
    <property type="project" value="Ensembl"/>
</dbReference>
<dbReference type="GO" id="GO:0060219">
    <property type="term" value="P:camera-type eye photoreceptor cell differentiation"/>
    <property type="evidence" value="ECO:0007669"/>
    <property type="project" value="Ensembl"/>
</dbReference>
<dbReference type="GO" id="GO:0007155">
    <property type="term" value="P:cell adhesion"/>
    <property type="evidence" value="ECO:0007669"/>
    <property type="project" value="UniProtKB-KW"/>
</dbReference>
<dbReference type="GO" id="GO:0050908">
    <property type="term" value="P:detection of light stimulus involved in visual perception"/>
    <property type="evidence" value="ECO:0007669"/>
    <property type="project" value="Ensembl"/>
</dbReference>
<dbReference type="GO" id="GO:0035845">
    <property type="term" value="P:photoreceptor cell outer segment organization"/>
    <property type="evidence" value="ECO:0007669"/>
    <property type="project" value="Ensembl"/>
</dbReference>
<dbReference type="GO" id="GO:0051291">
    <property type="term" value="P:protein heterooligomerization"/>
    <property type="evidence" value="ECO:0007669"/>
    <property type="project" value="Ensembl"/>
</dbReference>
<dbReference type="GO" id="GO:0051260">
    <property type="term" value="P:protein homooligomerization"/>
    <property type="evidence" value="ECO:0007669"/>
    <property type="project" value="Ensembl"/>
</dbReference>
<dbReference type="GO" id="GO:1903546">
    <property type="term" value="P:protein localization to photoreceptor outer segment"/>
    <property type="evidence" value="ECO:0007669"/>
    <property type="project" value="Ensembl"/>
</dbReference>
<dbReference type="GO" id="GO:0010468">
    <property type="term" value="P:regulation of gene expression"/>
    <property type="evidence" value="ECO:0007669"/>
    <property type="project" value="Ensembl"/>
</dbReference>
<dbReference type="GO" id="GO:0061298">
    <property type="term" value="P:retina vasculature development in camera-type eye"/>
    <property type="evidence" value="ECO:0007669"/>
    <property type="project" value="Ensembl"/>
</dbReference>
<dbReference type="GO" id="GO:0007601">
    <property type="term" value="P:visual perception"/>
    <property type="evidence" value="ECO:0000304"/>
    <property type="project" value="ProtInc"/>
</dbReference>
<dbReference type="CDD" id="cd03162">
    <property type="entry name" value="peripherin_like_LEL"/>
    <property type="match status" value="1"/>
</dbReference>
<dbReference type="FunFam" id="1.10.1450.10:FF:000002">
    <property type="entry name" value="Retinal outer segment membrane protein 1"/>
    <property type="match status" value="1"/>
</dbReference>
<dbReference type="Gene3D" id="1.10.1450.10">
    <property type="entry name" value="Tetraspanin"/>
    <property type="match status" value="1"/>
</dbReference>
<dbReference type="InterPro" id="IPR000830">
    <property type="entry name" value="Peripherin/rom-1"/>
</dbReference>
<dbReference type="InterPro" id="IPR018498">
    <property type="entry name" value="Peripherin/rom-1_CS"/>
</dbReference>
<dbReference type="InterPro" id="IPR042026">
    <property type="entry name" value="Peripherin_LEL"/>
</dbReference>
<dbReference type="InterPro" id="IPR018499">
    <property type="entry name" value="Tetraspanin/Peripherin"/>
</dbReference>
<dbReference type="InterPro" id="IPR008952">
    <property type="entry name" value="Tetraspanin_EC2_sf"/>
</dbReference>
<dbReference type="Pfam" id="PF00335">
    <property type="entry name" value="Tetraspanin"/>
    <property type="match status" value="1"/>
</dbReference>
<dbReference type="PRINTS" id="PR00218">
    <property type="entry name" value="PERIPHERNRDS"/>
</dbReference>
<dbReference type="SUPFAM" id="SSF48652">
    <property type="entry name" value="Tetraspanin"/>
    <property type="match status" value="1"/>
</dbReference>
<dbReference type="PROSITE" id="PS00930">
    <property type="entry name" value="RDS_ROM1"/>
    <property type="match status" value="1"/>
</dbReference>
<sequence>MAPVLPLVLPLQPRIRLAQGLWLLSWLLALAGGVILLCSGHLLVQLRHLGTFLAPSCQFPVLPQAALAAGAVALGTGLVGVGASRASLNAALYPPWRGVLGPLLVAGTAGGGGLLVVGLGLALALPGSLDEALEEGLVTALAHYKDTEVPGHCQAKRLVDELQLRYHCCGRHGYKDWFGVQWVSSRYLDPGDRDVADRIQSNVEGLYLTDGVPFSCCNPHSPRPCLQNRLSDSYAHPLFDPRQPNQNLWAQGCHEVLLEHLQDLAGTLGSMLAVTFLLQALVLLGLRYLQTALEGLGGVIDAGGETQGYLFPSGLKDMLKTAWLQGGVACRPAPEEAPPGEAPPKEDLSEA</sequence>